<evidence type="ECO:0000255" key="1">
    <source>
        <dbReference type="HAMAP-Rule" id="MF_00044"/>
    </source>
</evidence>
<name>SYDND_BACAC</name>
<gene>
    <name evidence="1" type="primary">aspS</name>
    <name type="ordered locus">BAMEG_4667</name>
</gene>
<accession>C3L608</accession>
<protein>
    <recommendedName>
        <fullName evidence="1">Aspartate--tRNA(Asp/Asn) ligase</fullName>
        <ecNumber evidence="1">6.1.1.23</ecNumber>
    </recommendedName>
    <alternativeName>
        <fullName evidence="1">Aspartyl-tRNA synthetase</fullName>
        <shortName evidence="1">AspRS</shortName>
    </alternativeName>
    <alternativeName>
        <fullName evidence="1">Non-discriminating aspartyl-tRNA synthetase</fullName>
        <shortName evidence="1">ND-AspRS</shortName>
    </alternativeName>
</protein>
<organism>
    <name type="scientific">Bacillus anthracis (strain CDC 684 / NRRL 3495)</name>
    <dbReference type="NCBI Taxonomy" id="568206"/>
    <lineage>
        <taxon>Bacteria</taxon>
        <taxon>Bacillati</taxon>
        <taxon>Bacillota</taxon>
        <taxon>Bacilli</taxon>
        <taxon>Bacillales</taxon>
        <taxon>Bacillaceae</taxon>
        <taxon>Bacillus</taxon>
        <taxon>Bacillus cereus group</taxon>
    </lineage>
</organism>
<comment type="function">
    <text evidence="1">Aspartyl-tRNA synthetase with relaxed tRNA specificity since it is able to aspartylate not only its cognate tRNA(Asp) but also tRNA(Asn). Reaction proceeds in two steps: L-aspartate is first activated by ATP to form Asp-AMP and then transferred to the acceptor end of tRNA(Asp/Asn).</text>
</comment>
<comment type="catalytic activity">
    <reaction evidence="1">
        <text>tRNA(Asx) + L-aspartate + ATP = L-aspartyl-tRNA(Asx) + AMP + diphosphate</text>
        <dbReference type="Rhea" id="RHEA:18349"/>
        <dbReference type="Rhea" id="RHEA-COMP:9710"/>
        <dbReference type="Rhea" id="RHEA-COMP:9711"/>
        <dbReference type="ChEBI" id="CHEBI:29991"/>
        <dbReference type="ChEBI" id="CHEBI:30616"/>
        <dbReference type="ChEBI" id="CHEBI:33019"/>
        <dbReference type="ChEBI" id="CHEBI:78442"/>
        <dbReference type="ChEBI" id="CHEBI:78516"/>
        <dbReference type="ChEBI" id="CHEBI:456215"/>
        <dbReference type="EC" id="6.1.1.23"/>
    </reaction>
</comment>
<comment type="subunit">
    <text evidence="1">Homodimer.</text>
</comment>
<comment type="subcellular location">
    <subcellularLocation>
        <location evidence="1">Cytoplasm</location>
    </subcellularLocation>
</comment>
<comment type="similarity">
    <text evidence="1">Belongs to the class-II aminoacyl-tRNA synthetase family. Type 1 subfamily.</text>
</comment>
<sequence>MAERTHACGKVTVEAVGQTVQLKGWVQKRRDLGGLIFIDLRDRTGIVQVVFNPETSKEALEVAETIRSEYVLHVEGTVVERGEGAINDNMATGRIEVQATKVSVLNAAKTTPIIIADDTDASEDVRLKYRYLDLRRPVMFNTFKMRHDVTKTIRNFLDTEEFLEVETPILTKSTPEGARDYLVPSRVHDGEFYALPQSPQLFKQLLMVGGFERYYQVARCFRDEDLRADRQPEFTQIDIEASFLTQDEILDMMERMMTKVMKDAKGVEVSAPFPRMKYADAMARYGSDKPDTRFEMELTDLSEFAAGCGFKVFTSAVESGGQVKAINAKGAASKYSRKDIDALTEFVKVYGAKGLAWLKVEEDGLKGPIAKFFGEEDASVLKNTLEATAGDLLLFVADKKSVVADSLGALRLRLGKELELIDESKFNFLWVTDWPLLEYDEDADRYFAAHHPFTMPFREDVELLETAPEKARAQAYDLVLNGYELGGGSLRIYERDVQEKMFKALGFSQEEAQEQFGFLLEAFEYGTPPHGGIALGLDRLVMLLAGRTNLRDTIAFPKTASASCLLTEAPSPVAEAQLEELNLKLNVKEEK</sequence>
<keyword id="KW-0030">Aminoacyl-tRNA synthetase</keyword>
<keyword id="KW-0067">ATP-binding</keyword>
<keyword id="KW-0963">Cytoplasm</keyword>
<keyword id="KW-0436">Ligase</keyword>
<keyword id="KW-0547">Nucleotide-binding</keyword>
<keyword id="KW-0648">Protein biosynthesis</keyword>
<feature type="chain" id="PRO_1000198955" description="Aspartate--tRNA(Asp/Asn) ligase">
    <location>
        <begin position="1"/>
        <end position="591"/>
    </location>
</feature>
<feature type="region of interest" description="Aspartate" evidence="1">
    <location>
        <begin position="200"/>
        <end position="203"/>
    </location>
</feature>
<feature type="binding site" evidence="1">
    <location>
        <position position="176"/>
    </location>
    <ligand>
        <name>L-aspartate</name>
        <dbReference type="ChEBI" id="CHEBI:29991"/>
    </ligand>
</feature>
<feature type="binding site" evidence="1">
    <location>
        <begin position="222"/>
        <end position="224"/>
    </location>
    <ligand>
        <name>ATP</name>
        <dbReference type="ChEBI" id="CHEBI:30616"/>
    </ligand>
</feature>
<feature type="binding site" evidence="1">
    <location>
        <position position="222"/>
    </location>
    <ligand>
        <name>L-aspartate</name>
        <dbReference type="ChEBI" id="CHEBI:29991"/>
    </ligand>
</feature>
<feature type="binding site" evidence="1">
    <location>
        <position position="231"/>
    </location>
    <ligand>
        <name>ATP</name>
        <dbReference type="ChEBI" id="CHEBI:30616"/>
    </ligand>
</feature>
<feature type="binding site" evidence="1">
    <location>
        <position position="450"/>
    </location>
    <ligand>
        <name>L-aspartate</name>
        <dbReference type="ChEBI" id="CHEBI:29991"/>
    </ligand>
</feature>
<feature type="binding site" evidence="1">
    <location>
        <position position="484"/>
    </location>
    <ligand>
        <name>ATP</name>
        <dbReference type="ChEBI" id="CHEBI:30616"/>
    </ligand>
</feature>
<feature type="binding site" evidence="1">
    <location>
        <position position="491"/>
    </location>
    <ligand>
        <name>L-aspartate</name>
        <dbReference type="ChEBI" id="CHEBI:29991"/>
    </ligand>
</feature>
<feature type="binding site" evidence="1">
    <location>
        <begin position="536"/>
        <end position="539"/>
    </location>
    <ligand>
        <name>ATP</name>
        <dbReference type="ChEBI" id="CHEBI:30616"/>
    </ligand>
</feature>
<feature type="site" description="Important for tRNA non-discrimination" evidence="1">
    <location>
        <position position="84"/>
    </location>
</feature>
<dbReference type="EC" id="6.1.1.23" evidence="1"/>
<dbReference type="EMBL" id="CP001215">
    <property type="protein sequence ID" value="ACP16764.1"/>
    <property type="molecule type" value="Genomic_DNA"/>
</dbReference>
<dbReference type="RefSeq" id="WP_000840914.1">
    <property type="nucleotide sequence ID" value="NC_012581.1"/>
</dbReference>
<dbReference type="SMR" id="C3L608"/>
<dbReference type="KEGG" id="bah:BAMEG_4667"/>
<dbReference type="HOGENOM" id="CLU_014330_3_2_9"/>
<dbReference type="GO" id="GO:0005737">
    <property type="term" value="C:cytoplasm"/>
    <property type="evidence" value="ECO:0007669"/>
    <property type="project" value="UniProtKB-SubCell"/>
</dbReference>
<dbReference type="GO" id="GO:0004815">
    <property type="term" value="F:aspartate-tRNA ligase activity"/>
    <property type="evidence" value="ECO:0007669"/>
    <property type="project" value="UniProtKB-UniRule"/>
</dbReference>
<dbReference type="GO" id="GO:0050560">
    <property type="term" value="F:aspartate-tRNA(Asn) ligase activity"/>
    <property type="evidence" value="ECO:0007669"/>
    <property type="project" value="UniProtKB-EC"/>
</dbReference>
<dbReference type="GO" id="GO:0005524">
    <property type="term" value="F:ATP binding"/>
    <property type="evidence" value="ECO:0007669"/>
    <property type="project" value="UniProtKB-UniRule"/>
</dbReference>
<dbReference type="GO" id="GO:0140096">
    <property type="term" value="F:catalytic activity, acting on a protein"/>
    <property type="evidence" value="ECO:0007669"/>
    <property type="project" value="UniProtKB-ARBA"/>
</dbReference>
<dbReference type="GO" id="GO:0003676">
    <property type="term" value="F:nucleic acid binding"/>
    <property type="evidence" value="ECO:0007669"/>
    <property type="project" value="InterPro"/>
</dbReference>
<dbReference type="GO" id="GO:0016740">
    <property type="term" value="F:transferase activity"/>
    <property type="evidence" value="ECO:0007669"/>
    <property type="project" value="UniProtKB-ARBA"/>
</dbReference>
<dbReference type="GO" id="GO:0006422">
    <property type="term" value="P:aspartyl-tRNA aminoacylation"/>
    <property type="evidence" value="ECO:0007669"/>
    <property type="project" value="UniProtKB-UniRule"/>
</dbReference>
<dbReference type="CDD" id="cd00777">
    <property type="entry name" value="AspRS_core"/>
    <property type="match status" value="1"/>
</dbReference>
<dbReference type="CDD" id="cd04317">
    <property type="entry name" value="EcAspRS_like_N"/>
    <property type="match status" value="1"/>
</dbReference>
<dbReference type="Gene3D" id="3.30.930.10">
    <property type="entry name" value="Bira Bifunctional Protein, Domain 2"/>
    <property type="match status" value="1"/>
</dbReference>
<dbReference type="Gene3D" id="3.30.1360.30">
    <property type="entry name" value="GAD-like domain"/>
    <property type="match status" value="1"/>
</dbReference>
<dbReference type="Gene3D" id="2.40.50.140">
    <property type="entry name" value="Nucleic acid-binding proteins"/>
    <property type="match status" value="1"/>
</dbReference>
<dbReference type="HAMAP" id="MF_00044">
    <property type="entry name" value="Asp_tRNA_synth_type1"/>
    <property type="match status" value="1"/>
</dbReference>
<dbReference type="InterPro" id="IPR004364">
    <property type="entry name" value="Aa-tRNA-synt_II"/>
</dbReference>
<dbReference type="InterPro" id="IPR006195">
    <property type="entry name" value="aa-tRNA-synth_II"/>
</dbReference>
<dbReference type="InterPro" id="IPR045864">
    <property type="entry name" value="aa-tRNA-synth_II/BPL/LPL"/>
</dbReference>
<dbReference type="InterPro" id="IPR004524">
    <property type="entry name" value="Asp-tRNA-ligase_1"/>
</dbReference>
<dbReference type="InterPro" id="IPR047089">
    <property type="entry name" value="Asp-tRNA-ligase_1_N"/>
</dbReference>
<dbReference type="InterPro" id="IPR002312">
    <property type="entry name" value="Asp/Asn-tRNA-synth_IIb"/>
</dbReference>
<dbReference type="InterPro" id="IPR047090">
    <property type="entry name" value="AspRS_core"/>
</dbReference>
<dbReference type="InterPro" id="IPR004115">
    <property type="entry name" value="GAD-like_sf"/>
</dbReference>
<dbReference type="InterPro" id="IPR029351">
    <property type="entry name" value="GAD_dom"/>
</dbReference>
<dbReference type="InterPro" id="IPR012340">
    <property type="entry name" value="NA-bd_OB-fold"/>
</dbReference>
<dbReference type="InterPro" id="IPR004365">
    <property type="entry name" value="NA-bd_OB_tRNA"/>
</dbReference>
<dbReference type="NCBIfam" id="TIGR00459">
    <property type="entry name" value="aspS_bact"/>
    <property type="match status" value="1"/>
</dbReference>
<dbReference type="NCBIfam" id="NF001750">
    <property type="entry name" value="PRK00476.1"/>
    <property type="match status" value="1"/>
</dbReference>
<dbReference type="PANTHER" id="PTHR22594:SF5">
    <property type="entry name" value="ASPARTATE--TRNA LIGASE, MITOCHONDRIAL"/>
    <property type="match status" value="1"/>
</dbReference>
<dbReference type="PANTHER" id="PTHR22594">
    <property type="entry name" value="ASPARTYL/LYSYL-TRNA SYNTHETASE"/>
    <property type="match status" value="1"/>
</dbReference>
<dbReference type="Pfam" id="PF02938">
    <property type="entry name" value="GAD"/>
    <property type="match status" value="1"/>
</dbReference>
<dbReference type="Pfam" id="PF00152">
    <property type="entry name" value="tRNA-synt_2"/>
    <property type="match status" value="1"/>
</dbReference>
<dbReference type="Pfam" id="PF01336">
    <property type="entry name" value="tRNA_anti-codon"/>
    <property type="match status" value="1"/>
</dbReference>
<dbReference type="PRINTS" id="PR01042">
    <property type="entry name" value="TRNASYNTHASP"/>
</dbReference>
<dbReference type="SUPFAM" id="SSF55681">
    <property type="entry name" value="Class II aaRS and biotin synthetases"/>
    <property type="match status" value="1"/>
</dbReference>
<dbReference type="SUPFAM" id="SSF55261">
    <property type="entry name" value="GAD domain-like"/>
    <property type="match status" value="1"/>
</dbReference>
<dbReference type="SUPFAM" id="SSF50249">
    <property type="entry name" value="Nucleic acid-binding proteins"/>
    <property type="match status" value="1"/>
</dbReference>
<dbReference type="PROSITE" id="PS50862">
    <property type="entry name" value="AA_TRNA_LIGASE_II"/>
    <property type="match status" value="1"/>
</dbReference>
<proteinExistence type="inferred from homology"/>
<reference key="1">
    <citation type="submission" date="2008-10" db="EMBL/GenBank/DDBJ databases">
        <title>Genome sequence of Bacillus anthracis str. CDC 684.</title>
        <authorList>
            <person name="Dodson R.J."/>
            <person name="Munk A.C."/>
            <person name="Brettin T."/>
            <person name="Bruce D."/>
            <person name="Detter C."/>
            <person name="Tapia R."/>
            <person name="Han C."/>
            <person name="Sutton G."/>
            <person name="Sims D."/>
        </authorList>
    </citation>
    <scope>NUCLEOTIDE SEQUENCE [LARGE SCALE GENOMIC DNA]</scope>
    <source>
        <strain>CDC 684 / NRRL 3495</strain>
    </source>
</reference>